<name>RL34_RHIME</name>
<feature type="chain" id="PRO_0000187448" description="Large ribosomal subunit protein bL34">
    <location>
        <begin position="1"/>
        <end position="44"/>
    </location>
</feature>
<feature type="region of interest" description="Disordered" evidence="2">
    <location>
        <begin position="1"/>
        <end position="44"/>
    </location>
</feature>
<feature type="compositionally biased region" description="Basic residues" evidence="2">
    <location>
        <begin position="10"/>
        <end position="19"/>
    </location>
</feature>
<feature type="compositionally biased region" description="Basic residues" evidence="2">
    <location>
        <begin position="26"/>
        <end position="44"/>
    </location>
</feature>
<proteinExistence type="inferred from homology"/>
<evidence type="ECO:0000255" key="1">
    <source>
        <dbReference type="HAMAP-Rule" id="MF_00391"/>
    </source>
</evidence>
<evidence type="ECO:0000256" key="2">
    <source>
        <dbReference type="SAM" id="MobiDB-lite"/>
    </source>
</evidence>
<evidence type="ECO:0000305" key="3"/>
<sequence>MKRTYQPSKLVRKRRHGFRARMSTKGGRKVLTARRARGRKRLSA</sequence>
<accession>Q92SF3</accession>
<organism>
    <name type="scientific">Rhizobium meliloti (strain 1021)</name>
    <name type="common">Ensifer meliloti</name>
    <name type="synonym">Sinorhizobium meliloti</name>
    <dbReference type="NCBI Taxonomy" id="266834"/>
    <lineage>
        <taxon>Bacteria</taxon>
        <taxon>Pseudomonadati</taxon>
        <taxon>Pseudomonadota</taxon>
        <taxon>Alphaproteobacteria</taxon>
        <taxon>Hyphomicrobiales</taxon>
        <taxon>Rhizobiaceae</taxon>
        <taxon>Sinorhizobium/Ensifer group</taxon>
        <taxon>Sinorhizobium</taxon>
    </lineage>
</organism>
<comment type="similarity">
    <text evidence="1">Belongs to the bacterial ribosomal protein bL34 family.</text>
</comment>
<protein>
    <recommendedName>
        <fullName evidence="1">Large ribosomal subunit protein bL34</fullName>
    </recommendedName>
    <alternativeName>
        <fullName evidence="3">50S ribosomal protein L34</fullName>
    </alternativeName>
</protein>
<dbReference type="EMBL" id="AL591688">
    <property type="protein sequence ID" value="CAC41883.1"/>
    <property type="molecule type" value="Genomic_DNA"/>
</dbReference>
<dbReference type="RefSeq" id="NP_384552.1">
    <property type="nucleotide sequence ID" value="NC_003047.1"/>
</dbReference>
<dbReference type="RefSeq" id="WP_003531576.1">
    <property type="nucleotide sequence ID" value="NC_003047.1"/>
</dbReference>
<dbReference type="SMR" id="Q92SF3"/>
<dbReference type="EnsemblBacteria" id="CAC41883">
    <property type="protein sequence ID" value="CAC41883"/>
    <property type="gene ID" value="SMc04434"/>
</dbReference>
<dbReference type="GeneID" id="89574774"/>
<dbReference type="KEGG" id="sme:SMc04434"/>
<dbReference type="PATRIC" id="fig|266834.11.peg.1821"/>
<dbReference type="eggNOG" id="COG0230">
    <property type="taxonomic scope" value="Bacteria"/>
</dbReference>
<dbReference type="HOGENOM" id="CLU_129938_2_0_5"/>
<dbReference type="OrthoDB" id="9804164at2"/>
<dbReference type="Proteomes" id="UP000001976">
    <property type="component" value="Chromosome"/>
</dbReference>
<dbReference type="GO" id="GO:1990904">
    <property type="term" value="C:ribonucleoprotein complex"/>
    <property type="evidence" value="ECO:0007669"/>
    <property type="project" value="UniProtKB-KW"/>
</dbReference>
<dbReference type="GO" id="GO:0005840">
    <property type="term" value="C:ribosome"/>
    <property type="evidence" value="ECO:0007669"/>
    <property type="project" value="UniProtKB-KW"/>
</dbReference>
<dbReference type="GO" id="GO:0003735">
    <property type="term" value="F:structural constituent of ribosome"/>
    <property type="evidence" value="ECO:0007669"/>
    <property type="project" value="InterPro"/>
</dbReference>
<dbReference type="GO" id="GO:0006412">
    <property type="term" value="P:translation"/>
    <property type="evidence" value="ECO:0007669"/>
    <property type="project" value="UniProtKB-UniRule"/>
</dbReference>
<dbReference type="FunFam" id="1.10.287.3980:FF:000001">
    <property type="entry name" value="Mitochondrial ribosomal protein L34"/>
    <property type="match status" value="1"/>
</dbReference>
<dbReference type="Gene3D" id="1.10.287.3980">
    <property type="match status" value="1"/>
</dbReference>
<dbReference type="HAMAP" id="MF_00391">
    <property type="entry name" value="Ribosomal_bL34"/>
    <property type="match status" value="1"/>
</dbReference>
<dbReference type="InterPro" id="IPR000271">
    <property type="entry name" value="Ribosomal_bL34"/>
</dbReference>
<dbReference type="InterPro" id="IPR020939">
    <property type="entry name" value="Ribosomal_bL34_CS"/>
</dbReference>
<dbReference type="NCBIfam" id="TIGR01030">
    <property type="entry name" value="rpmH_bact"/>
    <property type="match status" value="1"/>
</dbReference>
<dbReference type="PANTHER" id="PTHR14503:SF4">
    <property type="entry name" value="LARGE RIBOSOMAL SUBUNIT PROTEIN BL34M"/>
    <property type="match status" value="1"/>
</dbReference>
<dbReference type="PANTHER" id="PTHR14503">
    <property type="entry name" value="MITOCHONDRIAL RIBOSOMAL PROTEIN 34 FAMILY MEMBER"/>
    <property type="match status" value="1"/>
</dbReference>
<dbReference type="Pfam" id="PF00468">
    <property type="entry name" value="Ribosomal_L34"/>
    <property type="match status" value="1"/>
</dbReference>
<dbReference type="PROSITE" id="PS00784">
    <property type="entry name" value="RIBOSOMAL_L34"/>
    <property type="match status" value="1"/>
</dbReference>
<keyword id="KW-1185">Reference proteome</keyword>
<keyword id="KW-0687">Ribonucleoprotein</keyword>
<keyword id="KW-0689">Ribosomal protein</keyword>
<reference key="1">
    <citation type="journal article" date="2001" name="Proc. Natl. Acad. Sci. U.S.A.">
        <title>Analysis of the chromosome sequence of the legume symbiont Sinorhizobium meliloti strain 1021.</title>
        <authorList>
            <person name="Capela D."/>
            <person name="Barloy-Hubler F."/>
            <person name="Gouzy J."/>
            <person name="Bothe G."/>
            <person name="Ampe F."/>
            <person name="Batut J."/>
            <person name="Boistard P."/>
            <person name="Becker A."/>
            <person name="Boutry M."/>
            <person name="Cadieu E."/>
            <person name="Dreano S."/>
            <person name="Gloux S."/>
            <person name="Godrie T."/>
            <person name="Goffeau A."/>
            <person name="Kahn D."/>
            <person name="Kiss E."/>
            <person name="Lelaure V."/>
            <person name="Masuy D."/>
            <person name="Pohl T."/>
            <person name="Portetelle D."/>
            <person name="Puehler A."/>
            <person name="Purnelle B."/>
            <person name="Ramsperger U."/>
            <person name="Renard C."/>
            <person name="Thebault P."/>
            <person name="Vandenbol M."/>
            <person name="Weidner S."/>
            <person name="Galibert F."/>
        </authorList>
    </citation>
    <scope>NUCLEOTIDE SEQUENCE [LARGE SCALE GENOMIC DNA]</scope>
    <source>
        <strain>1021</strain>
    </source>
</reference>
<reference key="2">
    <citation type="journal article" date="2001" name="Science">
        <title>The composite genome of the legume symbiont Sinorhizobium meliloti.</title>
        <authorList>
            <person name="Galibert F."/>
            <person name="Finan T.M."/>
            <person name="Long S.R."/>
            <person name="Puehler A."/>
            <person name="Abola P."/>
            <person name="Ampe F."/>
            <person name="Barloy-Hubler F."/>
            <person name="Barnett M.J."/>
            <person name="Becker A."/>
            <person name="Boistard P."/>
            <person name="Bothe G."/>
            <person name="Boutry M."/>
            <person name="Bowser L."/>
            <person name="Buhrmester J."/>
            <person name="Cadieu E."/>
            <person name="Capela D."/>
            <person name="Chain P."/>
            <person name="Cowie A."/>
            <person name="Davis R.W."/>
            <person name="Dreano S."/>
            <person name="Federspiel N.A."/>
            <person name="Fisher R.F."/>
            <person name="Gloux S."/>
            <person name="Godrie T."/>
            <person name="Goffeau A."/>
            <person name="Golding B."/>
            <person name="Gouzy J."/>
            <person name="Gurjal M."/>
            <person name="Hernandez-Lucas I."/>
            <person name="Hong A."/>
            <person name="Huizar L."/>
            <person name="Hyman R.W."/>
            <person name="Jones T."/>
            <person name="Kahn D."/>
            <person name="Kahn M.L."/>
            <person name="Kalman S."/>
            <person name="Keating D.H."/>
            <person name="Kiss E."/>
            <person name="Komp C."/>
            <person name="Lelaure V."/>
            <person name="Masuy D."/>
            <person name="Palm C."/>
            <person name="Peck M.C."/>
            <person name="Pohl T.M."/>
            <person name="Portetelle D."/>
            <person name="Purnelle B."/>
            <person name="Ramsperger U."/>
            <person name="Surzycki R."/>
            <person name="Thebault P."/>
            <person name="Vandenbol M."/>
            <person name="Vorhoelter F.J."/>
            <person name="Weidner S."/>
            <person name="Wells D.H."/>
            <person name="Wong K."/>
            <person name="Yeh K.-C."/>
            <person name="Batut J."/>
        </authorList>
    </citation>
    <scope>NUCLEOTIDE SEQUENCE [LARGE SCALE GENOMIC DNA]</scope>
    <source>
        <strain>1021</strain>
    </source>
</reference>
<gene>
    <name evidence="1" type="primary">rpmH</name>
    <name type="ordered locus">R00446</name>
    <name type="ORF">SMc04434</name>
</gene>